<protein>
    <recommendedName>
        <fullName>Cysteine-rich venom protein natrin-1</fullName>
    </recommendedName>
    <alternativeName>
        <fullName>Cysteine-rich venom protein 1</fullName>
    </alternativeName>
    <alternativeName>
        <fullName>NA-CRVP1</fullName>
    </alternativeName>
    <alternativeName>
        <fullName>Protein G2a</fullName>
    </alternativeName>
</protein>
<proteinExistence type="evidence at protein level"/>
<accession>Q7T1K6</accession>
<feature type="signal peptide" evidence="2 3 5">
    <location>
        <begin position="1"/>
        <end position="18"/>
    </location>
</feature>
<feature type="chain" id="PRO_0000006279" description="Cysteine-rich venom protein natrin-1">
    <location>
        <begin position="19"/>
        <end position="239"/>
    </location>
</feature>
<feature type="domain" description="SCP">
    <location>
        <begin position="37"/>
        <end position="165"/>
    </location>
</feature>
<feature type="domain" description="ShKT" evidence="1">
    <location>
        <begin position="201"/>
        <end position="234"/>
    </location>
</feature>
<feature type="disulfide bond">
    <location>
        <begin position="74"/>
        <end position="152"/>
    </location>
</feature>
<feature type="disulfide bond">
    <location>
        <begin position="91"/>
        <end position="166"/>
    </location>
</feature>
<feature type="disulfide bond">
    <location>
        <begin position="147"/>
        <end position="163"/>
    </location>
</feature>
<feature type="disulfide bond">
    <location>
        <begin position="185"/>
        <end position="192"/>
    </location>
</feature>
<feature type="disulfide bond">
    <location>
        <begin position="188"/>
        <end position="197"/>
    </location>
</feature>
<feature type="disulfide bond">
    <location>
        <begin position="201"/>
        <end position="234"/>
    </location>
</feature>
<feature type="disulfide bond">
    <location>
        <begin position="210"/>
        <end position="228"/>
    </location>
</feature>
<feature type="disulfide bond">
    <location>
        <begin position="219"/>
        <end position="232"/>
    </location>
</feature>
<feature type="helix" evidence="8">
    <location>
        <begin position="23"/>
        <end position="25"/>
    </location>
</feature>
<feature type="helix" evidence="8">
    <location>
        <begin position="30"/>
        <end position="45"/>
    </location>
</feature>
<feature type="strand" evidence="8">
    <location>
        <begin position="51"/>
        <end position="53"/>
    </location>
</feature>
<feature type="helix" evidence="8">
    <location>
        <begin position="61"/>
        <end position="71"/>
    </location>
</feature>
<feature type="turn" evidence="8">
    <location>
        <begin position="72"/>
        <end position="74"/>
    </location>
</feature>
<feature type="helix" evidence="8">
    <location>
        <begin position="81"/>
        <end position="83"/>
    </location>
</feature>
<feature type="strand" evidence="8">
    <location>
        <begin position="92"/>
        <end position="100"/>
    </location>
</feature>
<feature type="helix" evidence="8">
    <location>
        <begin position="104"/>
        <end position="112"/>
    </location>
</feature>
<feature type="helix" evidence="8">
    <location>
        <begin position="113"/>
        <end position="117"/>
    </location>
</feature>
<feature type="turn" evidence="8">
    <location>
        <begin position="120"/>
        <end position="122"/>
    </location>
</feature>
<feature type="strand" evidence="8">
    <location>
        <begin position="123"/>
        <end position="126"/>
    </location>
</feature>
<feature type="helix" evidence="8">
    <location>
        <begin position="132"/>
        <end position="137"/>
    </location>
</feature>
<feature type="strand" evidence="8">
    <location>
        <begin position="144"/>
        <end position="151"/>
    </location>
</feature>
<feature type="strand" evidence="8">
    <location>
        <begin position="155"/>
        <end position="167"/>
    </location>
</feature>
<feature type="turn" evidence="8">
    <location>
        <begin position="172"/>
        <end position="176"/>
    </location>
</feature>
<feature type="strand" evidence="8">
    <location>
        <begin position="181"/>
        <end position="183"/>
    </location>
</feature>
<feature type="turn" evidence="8">
    <location>
        <begin position="184"/>
        <end position="187"/>
    </location>
</feature>
<feature type="strand" evidence="8">
    <location>
        <begin position="191"/>
        <end position="193"/>
    </location>
</feature>
<feature type="strand" evidence="8">
    <location>
        <begin position="206"/>
        <end position="208"/>
    </location>
</feature>
<feature type="helix" evidence="8">
    <location>
        <begin position="210"/>
        <end position="217"/>
    </location>
</feature>
<feature type="helix" evidence="9">
    <location>
        <begin position="218"/>
        <end position="220"/>
    </location>
</feature>
<feature type="helix" evidence="8">
    <location>
        <begin position="222"/>
        <end position="227"/>
    </location>
</feature>
<feature type="helix" evidence="8">
    <location>
        <begin position="229"/>
        <end position="233"/>
    </location>
</feature>
<feature type="strand" evidence="8">
    <location>
        <begin position="236"/>
        <end position="238"/>
    </location>
</feature>
<keyword id="KW-0002">3D-structure</keyword>
<keyword id="KW-0108">Calcium channel impairing toxin</keyword>
<keyword id="KW-1221">Calcium-activated potassium channel impairing toxin</keyword>
<keyword id="KW-0903">Direct protein sequencing</keyword>
<keyword id="KW-1015">Disulfide bond</keyword>
<keyword id="KW-0872">Ion channel impairing toxin</keyword>
<keyword id="KW-0632">Potassium channel impairing toxin</keyword>
<keyword id="KW-1219">Ryanodine-sensitive calcium-release channel impairing toxin</keyword>
<keyword id="KW-0964">Secreted</keyword>
<keyword id="KW-0732">Signal</keyword>
<keyword id="KW-0800">Toxin</keyword>
<keyword id="KW-1220">Voltage-gated potassium channel impairing toxin</keyword>
<organism>
    <name type="scientific">Naja atra</name>
    <name type="common">Chinese cobra</name>
    <dbReference type="NCBI Taxonomy" id="8656"/>
    <lineage>
        <taxon>Eukaryota</taxon>
        <taxon>Metazoa</taxon>
        <taxon>Chordata</taxon>
        <taxon>Craniata</taxon>
        <taxon>Vertebrata</taxon>
        <taxon>Euteleostomi</taxon>
        <taxon>Lepidosauria</taxon>
        <taxon>Squamata</taxon>
        <taxon>Bifurcata</taxon>
        <taxon>Unidentata</taxon>
        <taxon>Episquamata</taxon>
        <taxon>Toxicofera</taxon>
        <taxon>Serpentes</taxon>
        <taxon>Colubroidea</taxon>
        <taxon>Elapidae</taxon>
        <taxon>Elapinae</taxon>
        <taxon>Naja</taxon>
    </lineage>
</organism>
<dbReference type="EMBL" id="AY324325">
    <property type="protein sequence ID" value="AAP85301.1"/>
    <property type="molecule type" value="mRNA"/>
</dbReference>
<dbReference type="PDB" id="1XTA">
    <property type="method" value="X-ray"/>
    <property type="resolution" value="1.58 A"/>
    <property type="chains" value="A/B=19-239"/>
</dbReference>
<dbReference type="PDB" id="1XX5">
    <property type="method" value="X-ray"/>
    <property type="resolution" value="2.40 A"/>
    <property type="chains" value="A/B/C=19-239"/>
</dbReference>
<dbReference type="PDB" id="2GIZ">
    <property type="method" value="X-ray"/>
    <property type="resolution" value="1.68 A"/>
    <property type="chains" value="A/B=19-239"/>
</dbReference>
<dbReference type="PDB" id="3MZ8">
    <property type="method" value="X-ray"/>
    <property type="resolution" value="2.70 A"/>
    <property type="chains" value="A/B=19-239"/>
</dbReference>
<dbReference type="PDBsum" id="1XTA"/>
<dbReference type="PDBsum" id="1XX5"/>
<dbReference type="PDBsum" id="2GIZ"/>
<dbReference type="PDBsum" id="3MZ8"/>
<dbReference type="SMR" id="Q7T1K6"/>
<dbReference type="TCDB" id="8.B.9.1.2">
    <property type="family name" value="the triflin toxin (triflin or crisp) family"/>
</dbReference>
<dbReference type="EvolutionaryTrace" id="Q7T1K6"/>
<dbReference type="GO" id="GO:0005576">
    <property type="term" value="C:extracellular region"/>
    <property type="evidence" value="ECO:0007669"/>
    <property type="project" value="UniProtKB-SubCell"/>
</dbReference>
<dbReference type="GO" id="GO:0005246">
    <property type="term" value="F:calcium channel regulator activity"/>
    <property type="evidence" value="ECO:0007669"/>
    <property type="project" value="UniProtKB-KW"/>
</dbReference>
<dbReference type="GO" id="GO:0015459">
    <property type="term" value="F:potassium channel regulator activity"/>
    <property type="evidence" value="ECO:0007669"/>
    <property type="project" value="UniProtKB-KW"/>
</dbReference>
<dbReference type="GO" id="GO:0090729">
    <property type="term" value="F:toxin activity"/>
    <property type="evidence" value="ECO:0007669"/>
    <property type="project" value="UniProtKB-KW"/>
</dbReference>
<dbReference type="CDD" id="cd05383">
    <property type="entry name" value="CAP_CRISP"/>
    <property type="match status" value="1"/>
</dbReference>
<dbReference type="FunFam" id="1.10.10.740:FF:000001">
    <property type="entry name" value="Cysteine-rich secretory protein 2"/>
    <property type="match status" value="1"/>
</dbReference>
<dbReference type="FunFam" id="3.40.33.10:FF:000005">
    <property type="entry name" value="Cysteine-rich secretory protein 2"/>
    <property type="match status" value="1"/>
</dbReference>
<dbReference type="Gene3D" id="3.40.33.10">
    <property type="entry name" value="CAP"/>
    <property type="match status" value="1"/>
</dbReference>
<dbReference type="Gene3D" id="1.10.10.740">
    <property type="entry name" value="Crisp domain"/>
    <property type="match status" value="1"/>
</dbReference>
<dbReference type="InterPro" id="IPR018244">
    <property type="entry name" value="Allrgn_V5/Tpx1_CS"/>
</dbReference>
<dbReference type="InterPro" id="IPR014044">
    <property type="entry name" value="CAP_dom"/>
</dbReference>
<dbReference type="InterPro" id="IPR035940">
    <property type="entry name" value="CAP_sf"/>
</dbReference>
<dbReference type="InterPro" id="IPR042076">
    <property type="entry name" value="Crisp-like_dom"/>
</dbReference>
<dbReference type="InterPro" id="IPR001283">
    <property type="entry name" value="CRISP-related"/>
</dbReference>
<dbReference type="InterPro" id="IPR013871">
    <property type="entry name" value="Cysteine_rich_secretory"/>
</dbReference>
<dbReference type="InterPro" id="IPR034117">
    <property type="entry name" value="SCP_CRISP"/>
</dbReference>
<dbReference type="InterPro" id="IPR003582">
    <property type="entry name" value="ShKT_dom"/>
</dbReference>
<dbReference type="PANTHER" id="PTHR10334">
    <property type="entry name" value="CYSTEINE-RICH SECRETORY PROTEIN-RELATED"/>
    <property type="match status" value="1"/>
</dbReference>
<dbReference type="Pfam" id="PF00188">
    <property type="entry name" value="CAP"/>
    <property type="match status" value="1"/>
</dbReference>
<dbReference type="Pfam" id="PF08562">
    <property type="entry name" value="Crisp"/>
    <property type="match status" value="1"/>
</dbReference>
<dbReference type="PRINTS" id="PR00837">
    <property type="entry name" value="V5TPXLIKE"/>
</dbReference>
<dbReference type="SMART" id="SM00198">
    <property type="entry name" value="SCP"/>
    <property type="match status" value="1"/>
</dbReference>
<dbReference type="SUPFAM" id="SSF57546">
    <property type="entry name" value="Crisp domain-like"/>
    <property type="match status" value="1"/>
</dbReference>
<dbReference type="SUPFAM" id="SSF55797">
    <property type="entry name" value="PR-1-like"/>
    <property type="match status" value="1"/>
</dbReference>
<dbReference type="PROSITE" id="PS01009">
    <property type="entry name" value="CRISP_1"/>
    <property type="match status" value="1"/>
</dbReference>
<dbReference type="PROSITE" id="PS01010">
    <property type="entry name" value="CRISP_2"/>
    <property type="match status" value="1"/>
</dbReference>
<dbReference type="PROSITE" id="PS51670">
    <property type="entry name" value="SHKT"/>
    <property type="match status" value="1"/>
</dbReference>
<reference key="1">
    <citation type="submission" date="2003-06" db="EMBL/GenBank/DDBJ databases">
        <title>Purification and cloning of toxins of CRISP family from Naja atra venoms.</title>
        <authorList>
            <person name="Wang J."/>
            <person name="Teng M."/>
            <person name="Niu L."/>
        </authorList>
    </citation>
    <scope>NUCLEOTIDE SEQUENCE [MRNA]</scope>
</reference>
<reference key="2">
    <citation type="journal article" date="2003" name="Toxicon">
        <title>Purification and cloning of cysteine-rich proteins from Trimeresurus jerdonii and Naja atra venoms.</title>
        <authorList>
            <person name="Jin Y."/>
            <person name="Lu Q."/>
            <person name="Zhou X."/>
            <person name="Zhu S."/>
            <person name="Li R."/>
            <person name="Wang W."/>
            <person name="Xiong Y."/>
        </authorList>
    </citation>
    <scope>PROTEIN SEQUENCE OF 19-60</scope>
    <source>
        <tissue>Venom</tissue>
    </source>
</reference>
<reference key="3">
    <citation type="journal article" date="2005" name="Toxicon">
        <title>Purification and characterization of Taiwan cobra venom proteins with weak toxicity.</title>
        <authorList>
            <person name="Chang L.-S."/>
            <person name="Liou J.-C."/>
            <person name="Lin S.-R."/>
            <person name="Cheng Y.-C."/>
        </authorList>
    </citation>
    <scope>PROTEIN SEQUENCE OF 19-43</scope>
    <scope>FUNCTION</scope>
    <scope>MASS SPECTROMETRY</scope>
    <source>
        <tissue>Venom</tissue>
    </source>
</reference>
<reference key="4">
    <citation type="journal article" date="2006" name="Biochem. Biophys. Res. Commun.">
        <title>Structural and functional analysis of natrin, a venom protein that targets various ion channels.</title>
        <authorList>
            <person name="Wang F."/>
            <person name="Li H."/>
            <person name="Liu M.N."/>
            <person name="Song H."/>
            <person name="Han H.-M."/>
            <person name="Wang Q.-L."/>
            <person name="Yin C.-C."/>
            <person name="Zhou Y.-C."/>
            <person name="Qi Z."/>
            <person name="Shu Y.-Y."/>
            <person name="Lin Z.-J."/>
            <person name="Jiang T."/>
        </authorList>
    </citation>
    <scope>PROTEIN SEQUENCE OF 19-38</scope>
    <scope>X-RAY CRYSTALLOGRAPHY (1.68 ANGSTROMS) OF 19-239</scope>
    <scope>FUNCTION</scope>
    <scope>DISULFIDE BONDS</scope>
    <source>
        <tissue>Venom</tissue>
    </source>
</reference>
<reference key="5">
    <citation type="journal article" date="2008" name="Biophys. J.">
        <title>Structural and functional characterization of ryanodine receptor-natrin toxin interaction.</title>
        <authorList>
            <person name="Zhou Q."/>
            <person name="Wang Q.-L."/>
            <person name="Meng X."/>
            <person name="Strauss J."/>
            <person name="Shu Y."/>
            <person name="Jiang T."/>
            <person name="Wagenknecht T."/>
            <person name="Yin C.-C."/>
            <person name="Sui S.-F."/>
            <person name="Liu Z."/>
        </authorList>
    </citation>
    <scope>FUNCTION</scope>
</reference>
<reference key="6">
    <citation type="journal article" date="2004" name="Acta Crystallogr. D">
        <title>Purification, crystallization and preliminary X-ray crystallographic analysis of a cysteine-rich secretory protein (CRISP) from Naja atra venom.</title>
        <authorList>
            <person name="Wang Y.-L."/>
            <person name="Goh K.X."/>
            <person name="Wu W.G."/>
            <person name="Chen C.J."/>
        </authorList>
    </citation>
    <scope>X-RAY CRYSTALLOGRAPHY (1.58 ANGSTROMS) OF 19-239</scope>
    <scope>DISULFIDE BONDS</scope>
</reference>
<reference key="7">
    <citation type="journal article" date="2005" name="Biochemistry">
        <title>Blocking effect and crystal structure of natrin toxin, a cysteine-rich secretory protein from Naja atra venom that targets the BKCa channel.</title>
        <authorList>
            <person name="Wang J."/>
            <person name="Shen B."/>
            <person name="Guo M."/>
            <person name="Lou X."/>
            <person name="Duan Y."/>
            <person name="Cheng X.P."/>
            <person name="Teng M."/>
            <person name="Niu L."/>
            <person name="Liu Q."/>
            <person name="Huang Q."/>
            <person name="Hao Q."/>
        </authorList>
    </citation>
    <scope>X-RAY CRYSTALLOGRAPHY (2.4 ANGSTROMS) OF 19-239</scope>
    <scope>DISULFIDE BONDS</scope>
    <scope>FUNCTION</scope>
    <source>
        <tissue>Venom</tissue>
    </source>
</reference>
<name>CRVP1_NAJAT</name>
<evidence type="ECO:0000255" key="1">
    <source>
        <dbReference type="PROSITE-ProRule" id="PRU01005"/>
    </source>
</evidence>
<evidence type="ECO:0000269" key="2">
    <source>
    </source>
</evidence>
<evidence type="ECO:0000269" key="3">
    <source>
    </source>
</evidence>
<evidence type="ECO:0000269" key="4">
    <source>
    </source>
</evidence>
<evidence type="ECO:0000269" key="5">
    <source>
    </source>
</evidence>
<evidence type="ECO:0000269" key="6">
    <source>
    </source>
</evidence>
<evidence type="ECO:0000305" key="7"/>
<evidence type="ECO:0007829" key="8">
    <source>
        <dbReference type="PDB" id="1XTA"/>
    </source>
</evidence>
<evidence type="ECO:0007829" key="9">
    <source>
        <dbReference type="PDB" id="3MZ8"/>
    </source>
</evidence>
<comment type="function">
    <text evidence="3 4 5 6">Inhibits calcium-activated potassium channels (KCa1.1/KCNMA1), voltage-gated potassium channel Kv1.3/KCNA3, and the calcium release channel/ryanodine receptor (RyR). Binds specifically to type 1 RyR (RyR1) from skeletal muscle. Inhibit both the binding of ryanodine to RyR1, and RyR1's calcium-channel activity. Inhibits carbachol-induced muscle contraction and weakly blocks muscle contraction evoked by potassium.</text>
</comment>
<comment type="subcellular location">
    <subcellularLocation>
        <location>Secreted</location>
    </subcellularLocation>
</comment>
<comment type="tissue specificity">
    <text>Expressed by the venom gland.</text>
</comment>
<comment type="mass spectrometry"/>
<comment type="similarity">
    <text evidence="7">Belongs to the CRISP family.</text>
</comment>
<sequence>MIAFSLLCFAAVLQQSFGNVDFNSESTRRKKKQKEIVDLHNSLRRRVSPTASNMLKMEWYPEAASNAERWANTCSLNHSPDNLRVLEGIQCGESIYMSSNARTWTEIIHLWHDEYKNFVYGVGANPPGSVTGHYTQIVWYQTYRAGCAVSYCPSSAWSYFYVCQYCPSGNFQGKTATPYKLGPPCGDCPSACDNGLCTNPCTIYNKLTNCDSLLKQSSCQDDWIKSNCPASCFCRNKII</sequence>